<proteinExistence type="inferred from homology"/>
<name>RS16_RHOPS</name>
<protein>
    <recommendedName>
        <fullName evidence="1">Small ribosomal subunit protein bS16</fullName>
    </recommendedName>
    <alternativeName>
        <fullName evidence="3">30S ribosomal protein S16</fullName>
    </alternativeName>
</protein>
<reference key="1">
    <citation type="submission" date="2006-03" db="EMBL/GenBank/DDBJ databases">
        <title>Complete sequence of Rhodopseudomonas palustris BisB5.</title>
        <authorList>
            <consortium name="US DOE Joint Genome Institute"/>
            <person name="Copeland A."/>
            <person name="Lucas S."/>
            <person name="Lapidus A."/>
            <person name="Barry K."/>
            <person name="Detter J.C."/>
            <person name="Glavina del Rio T."/>
            <person name="Hammon N."/>
            <person name="Israni S."/>
            <person name="Dalin E."/>
            <person name="Tice H."/>
            <person name="Pitluck S."/>
            <person name="Chain P."/>
            <person name="Malfatti S."/>
            <person name="Shin M."/>
            <person name="Vergez L."/>
            <person name="Schmutz J."/>
            <person name="Larimer F."/>
            <person name="Land M."/>
            <person name="Hauser L."/>
            <person name="Pelletier D.A."/>
            <person name="Kyrpides N."/>
            <person name="Lykidis A."/>
            <person name="Oda Y."/>
            <person name="Harwood C.S."/>
            <person name="Richardson P."/>
        </authorList>
    </citation>
    <scope>NUCLEOTIDE SEQUENCE [LARGE SCALE GENOMIC DNA]</scope>
    <source>
        <strain>BisB5</strain>
    </source>
</reference>
<keyword id="KW-0687">Ribonucleoprotein</keyword>
<keyword id="KW-0689">Ribosomal protein</keyword>
<feature type="chain" id="PRO_1000049329" description="Small ribosomal subunit protein bS16">
    <location>
        <begin position="1"/>
        <end position="107"/>
    </location>
</feature>
<feature type="region of interest" description="Disordered" evidence="2">
    <location>
        <begin position="85"/>
        <end position="107"/>
    </location>
</feature>
<organism>
    <name type="scientific">Rhodopseudomonas palustris (strain BisB5)</name>
    <dbReference type="NCBI Taxonomy" id="316057"/>
    <lineage>
        <taxon>Bacteria</taxon>
        <taxon>Pseudomonadati</taxon>
        <taxon>Pseudomonadota</taxon>
        <taxon>Alphaproteobacteria</taxon>
        <taxon>Hyphomicrobiales</taxon>
        <taxon>Nitrobacteraceae</taxon>
        <taxon>Rhodopseudomonas</taxon>
    </lineage>
</organism>
<comment type="similarity">
    <text evidence="1">Belongs to the bacterial ribosomal protein bS16 family.</text>
</comment>
<evidence type="ECO:0000255" key="1">
    <source>
        <dbReference type="HAMAP-Rule" id="MF_00385"/>
    </source>
</evidence>
<evidence type="ECO:0000256" key="2">
    <source>
        <dbReference type="SAM" id="MobiDB-lite"/>
    </source>
</evidence>
<evidence type="ECO:0000305" key="3"/>
<accession>Q13DU2</accession>
<sequence>MSVVIRLARAGTKKRPFYHVVVADSRFPRDGRFIERLGYFNPLMAKDNEARLKLDLDKVKDWLAKGAQPSDRVARFLDTAGIKKREARNNPEKAVPRKERKAAEAGK</sequence>
<gene>
    <name evidence="1" type="primary">rpsP</name>
    <name type="ordered locus">RPD_0509</name>
</gene>
<dbReference type="EMBL" id="CP000283">
    <property type="protein sequence ID" value="ABE37747.1"/>
    <property type="molecule type" value="Genomic_DNA"/>
</dbReference>
<dbReference type="SMR" id="Q13DU2"/>
<dbReference type="STRING" id="316057.RPD_0509"/>
<dbReference type="KEGG" id="rpd:RPD_0509"/>
<dbReference type="eggNOG" id="COG0228">
    <property type="taxonomic scope" value="Bacteria"/>
</dbReference>
<dbReference type="HOGENOM" id="CLU_100590_3_1_5"/>
<dbReference type="BioCyc" id="RPAL316057:RPD_RS02610-MONOMER"/>
<dbReference type="Proteomes" id="UP000001818">
    <property type="component" value="Chromosome"/>
</dbReference>
<dbReference type="GO" id="GO:0005737">
    <property type="term" value="C:cytoplasm"/>
    <property type="evidence" value="ECO:0007669"/>
    <property type="project" value="UniProtKB-ARBA"/>
</dbReference>
<dbReference type="GO" id="GO:0015935">
    <property type="term" value="C:small ribosomal subunit"/>
    <property type="evidence" value="ECO:0007669"/>
    <property type="project" value="TreeGrafter"/>
</dbReference>
<dbReference type="GO" id="GO:0003735">
    <property type="term" value="F:structural constituent of ribosome"/>
    <property type="evidence" value="ECO:0007669"/>
    <property type="project" value="InterPro"/>
</dbReference>
<dbReference type="GO" id="GO:0006412">
    <property type="term" value="P:translation"/>
    <property type="evidence" value="ECO:0007669"/>
    <property type="project" value="UniProtKB-UniRule"/>
</dbReference>
<dbReference type="FunFam" id="3.30.1320.10:FF:000008">
    <property type="entry name" value="30S ribosomal protein S16"/>
    <property type="match status" value="1"/>
</dbReference>
<dbReference type="Gene3D" id="3.30.1320.10">
    <property type="match status" value="1"/>
</dbReference>
<dbReference type="HAMAP" id="MF_00385">
    <property type="entry name" value="Ribosomal_bS16"/>
    <property type="match status" value="1"/>
</dbReference>
<dbReference type="InterPro" id="IPR000307">
    <property type="entry name" value="Ribosomal_bS16"/>
</dbReference>
<dbReference type="InterPro" id="IPR023803">
    <property type="entry name" value="Ribosomal_bS16_dom_sf"/>
</dbReference>
<dbReference type="NCBIfam" id="TIGR00002">
    <property type="entry name" value="S16"/>
    <property type="match status" value="1"/>
</dbReference>
<dbReference type="PANTHER" id="PTHR12919">
    <property type="entry name" value="30S RIBOSOMAL PROTEIN S16"/>
    <property type="match status" value="1"/>
</dbReference>
<dbReference type="PANTHER" id="PTHR12919:SF20">
    <property type="entry name" value="SMALL RIBOSOMAL SUBUNIT PROTEIN BS16M"/>
    <property type="match status" value="1"/>
</dbReference>
<dbReference type="Pfam" id="PF00886">
    <property type="entry name" value="Ribosomal_S16"/>
    <property type="match status" value="1"/>
</dbReference>
<dbReference type="SUPFAM" id="SSF54565">
    <property type="entry name" value="Ribosomal protein S16"/>
    <property type="match status" value="1"/>
</dbReference>